<proteinExistence type="evidence at transcript level"/>
<feature type="transit peptide" description="Chloroplast" evidence="1">
    <location>
        <begin position="1"/>
        <end position="34"/>
    </location>
</feature>
<feature type="chain" id="PRO_0000007138" description="Stearoyl-[acyl-carrier-protein] 9-desaturase, chloroplastic">
    <location>
        <begin position="35"/>
        <end position="398"/>
    </location>
</feature>
<feature type="region of interest" description="Disordered" evidence="3">
    <location>
        <begin position="46"/>
        <end position="66"/>
    </location>
</feature>
<feature type="binding site" evidence="2">
    <location>
        <position position="140"/>
    </location>
    <ligand>
        <name>Fe cation</name>
        <dbReference type="ChEBI" id="CHEBI:24875"/>
        <label>1</label>
    </ligand>
</feature>
<feature type="binding site" evidence="2">
    <location>
        <position position="178"/>
    </location>
    <ligand>
        <name>Fe cation</name>
        <dbReference type="ChEBI" id="CHEBI:24875"/>
        <label>1</label>
    </ligand>
</feature>
<feature type="binding site" evidence="2">
    <location>
        <position position="178"/>
    </location>
    <ligand>
        <name>Fe cation</name>
        <dbReference type="ChEBI" id="CHEBI:24875"/>
        <label>2</label>
    </ligand>
</feature>
<feature type="binding site" evidence="2">
    <location>
        <position position="181"/>
    </location>
    <ligand>
        <name>Fe cation</name>
        <dbReference type="ChEBI" id="CHEBI:24875"/>
        <label>1</label>
    </ligand>
</feature>
<feature type="binding site" evidence="2">
    <location>
        <position position="231"/>
    </location>
    <ligand>
        <name>Fe cation</name>
        <dbReference type="ChEBI" id="CHEBI:24875"/>
        <label>2</label>
    </ligand>
</feature>
<feature type="binding site" evidence="2">
    <location>
        <position position="264"/>
    </location>
    <ligand>
        <name>Fe cation</name>
        <dbReference type="ChEBI" id="CHEBI:24875"/>
        <label>1</label>
    </ligand>
</feature>
<feature type="binding site" evidence="2">
    <location>
        <position position="264"/>
    </location>
    <ligand>
        <name>Fe cation</name>
        <dbReference type="ChEBI" id="CHEBI:24875"/>
        <label>2</label>
    </ligand>
</feature>
<feature type="binding site" evidence="2">
    <location>
        <position position="267"/>
    </location>
    <ligand>
        <name>Fe cation</name>
        <dbReference type="ChEBI" id="CHEBI:24875"/>
        <label>2</label>
    </ligand>
</feature>
<organism>
    <name type="scientific">Simmondsia chinensis</name>
    <name type="common">Jojoba</name>
    <name type="synonym">Buxus chinensis</name>
    <dbReference type="NCBI Taxonomy" id="3999"/>
    <lineage>
        <taxon>Eukaryota</taxon>
        <taxon>Viridiplantae</taxon>
        <taxon>Streptophyta</taxon>
        <taxon>Embryophyta</taxon>
        <taxon>Tracheophyta</taxon>
        <taxon>Spermatophyta</taxon>
        <taxon>Magnoliopsida</taxon>
        <taxon>eudicotyledons</taxon>
        <taxon>Gunneridae</taxon>
        <taxon>Pentapetalae</taxon>
        <taxon>Caryophyllales</taxon>
        <taxon>Simmondsiaceae</taxon>
        <taxon>Simmondsia</taxon>
    </lineage>
</organism>
<name>STAD_SIMCH</name>
<dbReference type="EC" id="1.14.19.2" evidence="2"/>
<dbReference type="EMBL" id="M83199">
    <property type="protein sequence ID" value="AAA33932.1"/>
    <property type="molecule type" value="mRNA"/>
</dbReference>
<dbReference type="SMR" id="Q01753"/>
<dbReference type="UniPathway" id="UPA00199"/>
<dbReference type="GO" id="GO:0009570">
    <property type="term" value="C:chloroplast stroma"/>
    <property type="evidence" value="ECO:0007669"/>
    <property type="project" value="TreeGrafter"/>
</dbReference>
<dbReference type="GO" id="GO:0046872">
    <property type="term" value="F:metal ion binding"/>
    <property type="evidence" value="ECO:0007669"/>
    <property type="project" value="UniProtKB-KW"/>
</dbReference>
<dbReference type="GO" id="GO:0045300">
    <property type="term" value="F:stearoyl-[ACP] desaturase activity"/>
    <property type="evidence" value="ECO:0007669"/>
    <property type="project" value="UniProtKB-EC"/>
</dbReference>
<dbReference type="GO" id="GO:0006633">
    <property type="term" value="P:fatty acid biosynthetic process"/>
    <property type="evidence" value="ECO:0007669"/>
    <property type="project" value="UniProtKB-KW"/>
</dbReference>
<dbReference type="CDD" id="cd01050">
    <property type="entry name" value="Acyl_ACP_Desat"/>
    <property type="match status" value="1"/>
</dbReference>
<dbReference type="FunFam" id="1.10.620.20:FF:000002">
    <property type="entry name" value="Stearoyl-[acyl-carrier-protein] 9-desaturase, chloroplastic"/>
    <property type="match status" value="1"/>
</dbReference>
<dbReference type="Gene3D" id="1.10.620.20">
    <property type="entry name" value="Ribonucleotide Reductase, subunit A"/>
    <property type="match status" value="1"/>
</dbReference>
<dbReference type="InterPro" id="IPR005803">
    <property type="entry name" value="FADS-2_CS"/>
</dbReference>
<dbReference type="InterPro" id="IPR005067">
    <property type="entry name" value="Fatty_acid_desaturase-2"/>
</dbReference>
<dbReference type="InterPro" id="IPR009078">
    <property type="entry name" value="Ferritin-like_SF"/>
</dbReference>
<dbReference type="InterPro" id="IPR012348">
    <property type="entry name" value="RNR-like"/>
</dbReference>
<dbReference type="PANTHER" id="PTHR31155">
    <property type="entry name" value="ACYL- ACYL-CARRIER-PROTEIN DESATURASE-RELATED"/>
    <property type="match status" value="1"/>
</dbReference>
<dbReference type="PANTHER" id="PTHR31155:SF27">
    <property type="entry name" value="STEAROYL-[ACYL-CARRIER-PROTEIN] 9-DESATURASE 5, CHLOROPLASTIC"/>
    <property type="match status" value="1"/>
</dbReference>
<dbReference type="Pfam" id="PF03405">
    <property type="entry name" value="FA_desaturase_2"/>
    <property type="match status" value="1"/>
</dbReference>
<dbReference type="PIRSF" id="PIRSF000346">
    <property type="entry name" value="Dlt9_acylACP_des"/>
    <property type="match status" value="1"/>
</dbReference>
<dbReference type="SUPFAM" id="SSF47240">
    <property type="entry name" value="Ferritin-like"/>
    <property type="match status" value="1"/>
</dbReference>
<dbReference type="PROSITE" id="PS00574">
    <property type="entry name" value="FATTY_ACID_DESATUR_2"/>
    <property type="match status" value="1"/>
</dbReference>
<sequence length="398" mass="45131">MALKLHHTAFNPSMAVTSSGLPRSYHLRSHRVFMASSTIGITSKEIPNAKKPHMPPREAHVQKTHSMPPQKIEIFKSLEGWAEENVLVHLKPVEKCWQPQDFLPDPASEGFMDQVKELRERTKEIPDEYLVVLVGDMITEEALPTYQTMLNTLDGVRDETGASLTSWAIWTRAWTAEENRHGDLLNKYLYLTGRVDMKQIEKTIQYLIGSGMDPRSENNPYLGFIYTSFQERATFISHGNTARLAKDHGDFQLAQVCGIIAADEKRHETAYTKIVEKLFEIDPDGAVLALADMMRKKVSMPAHLMYDGKDDNLFENYSAVAQQIGVYTAKDYADILEHLVNRWKVENLMGLSGEGHKAQDFVCGLAPRIRKLGERAQSLSKPVSLVPFSWIFNKELKV</sequence>
<keyword id="KW-0150">Chloroplast</keyword>
<keyword id="KW-0275">Fatty acid biosynthesis</keyword>
<keyword id="KW-0276">Fatty acid metabolism</keyword>
<keyword id="KW-0408">Iron</keyword>
<keyword id="KW-0444">Lipid biosynthesis</keyword>
<keyword id="KW-0443">Lipid metabolism</keyword>
<keyword id="KW-0479">Metal-binding</keyword>
<keyword id="KW-0560">Oxidoreductase</keyword>
<keyword id="KW-0934">Plastid</keyword>
<keyword id="KW-0809">Transit peptide</keyword>
<evidence type="ECO:0000250" key="1">
    <source>
        <dbReference type="UniProtKB" id="P22243"/>
    </source>
</evidence>
<evidence type="ECO:0000250" key="2">
    <source>
        <dbReference type="UniProtKB" id="P22337"/>
    </source>
</evidence>
<evidence type="ECO:0000256" key="3">
    <source>
        <dbReference type="SAM" id="MobiDB-lite"/>
    </source>
</evidence>
<evidence type="ECO:0000305" key="4"/>
<protein>
    <recommendedName>
        <fullName>Stearoyl-[acyl-carrier-protein] 9-desaturase, chloroplastic</fullName>
        <shortName>Stearoyl-ACP desaturase</shortName>
        <ecNumber evidence="2">1.14.19.2</ecNumber>
    </recommendedName>
    <alternativeName>
        <fullName>Acyl-[acyl-carrier-protein] desaturase</fullName>
    </alternativeName>
</protein>
<accession>Q01753</accession>
<reference key="1">
    <citation type="journal article" date="1992" name="Plant Physiol.">
        <title>Nucleotide sequence of a complementary DNA clone encoding stearoyl-acyl carrier protein desaturase from Simmondsia chinensis.</title>
        <authorList>
            <person name="Sato A."/>
            <person name="Becker C.K."/>
            <person name="Knauf V.C."/>
        </authorList>
    </citation>
    <scope>NUCLEOTIDE SEQUENCE [MRNA]</scope>
</reference>
<comment type="function">
    <text evidence="2">Converts stearoyl-ACP to oleoyl-ACP by introduction of a cis double bond between carbons 9 and 10 of the acyl chain.</text>
</comment>
<comment type="catalytic activity">
    <reaction evidence="2">
        <text>octadecanoyl-[ACP] + 2 reduced [2Fe-2S]-[ferredoxin] + O2 + 2 H(+) = (9Z)-octadecenoyl-[ACP] + 2 oxidized [2Fe-2S]-[ferredoxin] + 2 H2O</text>
        <dbReference type="Rhea" id="RHEA:11776"/>
        <dbReference type="Rhea" id="RHEA-COMP:9656"/>
        <dbReference type="Rhea" id="RHEA-COMP:9924"/>
        <dbReference type="Rhea" id="RHEA-COMP:10000"/>
        <dbReference type="Rhea" id="RHEA-COMP:10001"/>
        <dbReference type="ChEBI" id="CHEBI:15377"/>
        <dbReference type="ChEBI" id="CHEBI:15378"/>
        <dbReference type="ChEBI" id="CHEBI:15379"/>
        <dbReference type="ChEBI" id="CHEBI:33737"/>
        <dbReference type="ChEBI" id="CHEBI:33738"/>
        <dbReference type="ChEBI" id="CHEBI:78495"/>
        <dbReference type="ChEBI" id="CHEBI:78783"/>
        <dbReference type="EC" id="1.14.19.2"/>
    </reaction>
</comment>
<comment type="cofactor">
    <cofactor evidence="2">
        <name>Fe(2+)</name>
        <dbReference type="ChEBI" id="CHEBI:29033"/>
    </cofactor>
    <text evidence="2">Binds 2 Fe(2+) ions per subunit.</text>
</comment>
<comment type="pathway">
    <text>Lipid metabolism; fatty acid metabolism.</text>
</comment>
<comment type="subunit">
    <text>Homodimer.</text>
</comment>
<comment type="subcellular location">
    <subcellularLocation>
        <location>Plastid</location>
        <location>Chloroplast</location>
    </subcellularLocation>
    <subcellularLocation>
        <location>Plastid</location>
    </subcellularLocation>
    <text>In green tissue, found in chloroplasts. In non-photosynthetic tissue, found in plastids.</text>
</comment>
<comment type="similarity">
    <text evidence="4">Belongs to the fatty acid desaturase type 2 family.</text>
</comment>